<protein>
    <recommendedName>
        <fullName evidence="1">Threonine--tRNA ligase</fullName>
        <ecNumber evidence="1">6.1.1.3</ecNumber>
    </recommendedName>
    <alternativeName>
        <fullName evidence="1">Threonyl-tRNA synthetase</fullName>
        <shortName evidence="1">ThrRS</shortName>
    </alternativeName>
</protein>
<comment type="function">
    <text evidence="1">Catalyzes the attachment of threonine to tRNA(Thr) in a two-step reaction: L-threonine is first activated by ATP to form Thr-AMP and then transferred to the acceptor end of tRNA(Thr). Also edits incorrectly charged L-seryl-tRNA(Thr).</text>
</comment>
<comment type="catalytic activity">
    <reaction evidence="1">
        <text>tRNA(Thr) + L-threonine + ATP = L-threonyl-tRNA(Thr) + AMP + diphosphate + H(+)</text>
        <dbReference type="Rhea" id="RHEA:24624"/>
        <dbReference type="Rhea" id="RHEA-COMP:9670"/>
        <dbReference type="Rhea" id="RHEA-COMP:9704"/>
        <dbReference type="ChEBI" id="CHEBI:15378"/>
        <dbReference type="ChEBI" id="CHEBI:30616"/>
        <dbReference type="ChEBI" id="CHEBI:33019"/>
        <dbReference type="ChEBI" id="CHEBI:57926"/>
        <dbReference type="ChEBI" id="CHEBI:78442"/>
        <dbReference type="ChEBI" id="CHEBI:78534"/>
        <dbReference type="ChEBI" id="CHEBI:456215"/>
        <dbReference type="EC" id="6.1.1.3"/>
    </reaction>
</comment>
<comment type="cofactor">
    <cofactor evidence="1">
        <name>Zn(2+)</name>
        <dbReference type="ChEBI" id="CHEBI:29105"/>
    </cofactor>
    <text evidence="1">Binds 1 zinc ion per subunit.</text>
</comment>
<comment type="subunit">
    <text evidence="1">Homodimer.</text>
</comment>
<comment type="subcellular location">
    <subcellularLocation>
        <location evidence="1">Cytoplasm</location>
    </subcellularLocation>
</comment>
<comment type="similarity">
    <text evidence="1">Belongs to the class-II aminoacyl-tRNA synthetase family.</text>
</comment>
<feature type="chain" id="PRO_1000077371" description="Threonine--tRNA ligase">
    <location>
        <begin position="1"/>
        <end position="642"/>
    </location>
</feature>
<feature type="domain" description="TGS" evidence="2">
    <location>
        <begin position="1"/>
        <end position="61"/>
    </location>
</feature>
<feature type="region of interest" description="Catalytic" evidence="1">
    <location>
        <begin position="243"/>
        <end position="534"/>
    </location>
</feature>
<feature type="binding site" evidence="1">
    <location>
        <position position="334"/>
    </location>
    <ligand>
        <name>Zn(2+)</name>
        <dbReference type="ChEBI" id="CHEBI:29105"/>
    </ligand>
</feature>
<feature type="binding site" evidence="1">
    <location>
        <position position="385"/>
    </location>
    <ligand>
        <name>Zn(2+)</name>
        <dbReference type="ChEBI" id="CHEBI:29105"/>
    </ligand>
</feature>
<feature type="binding site" evidence="1">
    <location>
        <position position="511"/>
    </location>
    <ligand>
        <name>Zn(2+)</name>
        <dbReference type="ChEBI" id="CHEBI:29105"/>
    </ligand>
</feature>
<proteinExistence type="inferred from homology"/>
<name>SYT_SALPB</name>
<accession>A9N243</accession>
<sequence length="642" mass="73962">MPVITLPDGSQRHYDHPVSPMDVALDIGPGLAKATIAGRVNGELVDASDLIENDATLAIITAKDEEGLEIIRHSCAHLLGHAIKQLWPHTKMAIGPVVDNGFYYDVDLDRTLTQEDVEALEKRMHELAEKNYDVIKKKVSWHDARETFVKRGETYKVAILDENIAHDDKPGLYHHEEYVDMCRGPHVPNMRFCHHFKLMKTAGAYWRGDSNNKMLQRIYGTAWADKKALNAYLQRLEEAAKRDHRKIGKQLDLYHMQEEAPGMVFWHNDGWTIFRELEVFVRSKLKEYQYQEVKGPFMMDRVLWEKTGHWDNYKDAMFTTSSENREYCIKPMNCPGHVQIFNQGLKSYRDLPLRMAEFGSCHRNEPSGALHGLMRVRGFTQDDAHIFCTEEQIRDEVNACIRMVYDMYSTFGFEKIVVKLSTRPDKRIGSDEMWDRAEADLAVALEENNIPFEYQLGEGAFYGPKIEFTLYDCLDRAWQCGTVQLDFSLPSRLSASYVGEDNERKVPVMIHRAILGSMERFIGILTEEFAGFFPTWLAPVQVVVMNITDSQSEYVNELTQKLQNAGIRVKADLRNEKIGFKIREHTLRRVPYMLVCGDKEVEAGKVAVRTRRGKDLGSLDVNDVIEKLQQEIRSRSLQQLEE</sequence>
<organism>
    <name type="scientific">Salmonella paratyphi B (strain ATCC BAA-1250 / SPB7)</name>
    <dbReference type="NCBI Taxonomy" id="1016998"/>
    <lineage>
        <taxon>Bacteria</taxon>
        <taxon>Pseudomonadati</taxon>
        <taxon>Pseudomonadota</taxon>
        <taxon>Gammaproteobacteria</taxon>
        <taxon>Enterobacterales</taxon>
        <taxon>Enterobacteriaceae</taxon>
        <taxon>Salmonella</taxon>
    </lineage>
</organism>
<dbReference type="EC" id="6.1.1.3" evidence="1"/>
<dbReference type="EMBL" id="CP000886">
    <property type="protein sequence ID" value="ABX67392.1"/>
    <property type="molecule type" value="Genomic_DNA"/>
</dbReference>
<dbReference type="RefSeq" id="WP_001144217.1">
    <property type="nucleotide sequence ID" value="NC_010102.1"/>
</dbReference>
<dbReference type="SMR" id="A9N243"/>
<dbReference type="KEGG" id="spq:SPAB_02005"/>
<dbReference type="PATRIC" id="fig|1016998.12.peg.1893"/>
<dbReference type="HOGENOM" id="CLU_008554_0_1_6"/>
<dbReference type="BioCyc" id="SENT1016998:SPAB_RS08180-MONOMER"/>
<dbReference type="Proteomes" id="UP000008556">
    <property type="component" value="Chromosome"/>
</dbReference>
<dbReference type="GO" id="GO:0005829">
    <property type="term" value="C:cytosol"/>
    <property type="evidence" value="ECO:0007669"/>
    <property type="project" value="TreeGrafter"/>
</dbReference>
<dbReference type="GO" id="GO:0005524">
    <property type="term" value="F:ATP binding"/>
    <property type="evidence" value="ECO:0007669"/>
    <property type="project" value="UniProtKB-UniRule"/>
</dbReference>
<dbReference type="GO" id="GO:0046872">
    <property type="term" value="F:metal ion binding"/>
    <property type="evidence" value="ECO:0007669"/>
    <property type="project" value="UniProtKB-KW"/>
</dbReference>
<dbReference type="GO" id="GO:0004829">
    <property type="term" value="F:threonine-tRNA ligase activity"/>
    <property type="evidence" value="ECO:0007669"/>
    <property type="project" value="UniProtKB-UniRule"/>
</dbReference>
<dbReference type="GO" id="GO:0000049">
    <property type="term" value="F:tRNA binding"/>
    <property type="evidence" value="ECO:0007669"/>
    <property type="project" value="UniProtKB-KW"/>
</dbReference>
<dbReference type="GO" id="GO:0006435">
    <property type="term" value="P:threonyl-tRNA aminoacylation"/>
    <property type="evidence" value="ECO:0007669"/>
    <property type="project" value="UniProtKB-UniRule"/>
</dbReference>
<dbReference type="CDD" id="cd01667">
    <property type="entry name" value="TGS_ThrRS"/>
    <property type="match status" value="1"/>
</dbReference>
<dbReference type="CDD" id="cd00860">
    <property type="entry name" value="ThrRS_anticodon"/>
    <property type="match status" value="1"/>
</dbReference>
<dbReference type="CDD" id="cd00771">
    <property type="entry name" value="ThrRS_core"/>
    <property type="match status" value="1"/>
</dbReference>
<dbReference type="FunFam" id="3.10.20.30:FF:000005">
    <property type="entry name" value="Threonine--tRNA ligase"/>
    <property type="match status" value="1"/>
</dbReference>
<dbReference type="FunFam" id="3.30.54.20:FF:000002">
    <property type="entry name" value="Threonine--tRNA ligase"/>
    <property type="match status" value="1"/>
</dbReference>
<dbReference type="FunFam" id="3.30.930.10:FF:000002">
    <property type="entry name" value="Threonine--tRNA ligase"/>
    <property type="match status" value="1"/>
</dbReference>
<dbReference type="FunFam" id="3.40.50.800:FF:000001">
    <property type="entry name" value="Threonine--tRNA ligase"/>
    <property type="match status" value="1"/>
</dbReference>
<dbReference type="FunFam" id="3.30.980.10:FF:000005">
    <property type="entry name" value="Threonyl-tRNA synthetase, mitochondrial"/>
    <property type="match status" value="1"/>
</dbReference>
<dbReference type="Gene3D" id="3.10.20.30">
    <property type="match status" value="1"/>
</dbReference>
<dbReference type="Gene3D" id="3.30.54.20">
    <property type="match status" value="1"/>
</dbReference>
<dbReference type="Gene3D" id="3.40.50.800">
    <property type="entry name" value="Anticodon-binding domain"/>
    <property type="match status" value="1"/>
</dbReference>
<dbReference type="Gene3D" id="3.30.930.10">
    <property type="entry name" value="Bira Bifunctional Protein, Domain 2"/>
    <property type="match status" value="1"/>
</dbReference>
<dbReference type="Gene3D" id="3.30.980.10">
    <property type="entry name" value="Threonyl-trna Synthetase, Chain A, domain 2"/>
    <property type="match status" value="1"/>
</dbReference>
<dbReference type="HAMAP" id="MF_00184">
    <property type="entry name" value="Thr_tRNA_synth"/>
    <property type="match status" value="1"/>
</dbReference>
<dbReference type="InterPro" id="IPR002314">
    <property type="entry name" value="aa-tRNA-synt_IIb"/>
</dbReference>
<dbReference type="InterPro" id="IPR006195">
    <property type="entry name" value="aa-tRNA-synth_II"/>
</dbReference>
<dbReference type="InterPro" id="IPR045864">
    <property type="entry name" value="aa-tRNA-synth_II/BPL/LPL"/>
</dbReference>
<dbReference type="InterPro" id="IPR004154">
    <property type="entry name" value="Anticodon-bd"/>
</dbReference>
<dbReference type="InterPro" id="IPR036621">
    <property type="entry name" value="Anticodon-bd_dom_sf"/>
</dbReference>
<dbReference type="InterPro" id="IPR012675">
    <property type="entry name" value="Beta-grasp_dom_sf"/>
</dbReference>
<dbReference type="InterPro" id="IPR004095">
    <property type="entry name" value="TGS"/>
</dbReference>
<dbReference type="InterPro" id="IPR012676">
    <property type="entry name" value="TGS-like"/>
</dbReference>
<dbReference type="InterPro" id="IPR002320">
    <property type="entry name" value="Thr-tRNA-ligase_IIa"/>
</dbReference>
<dbReference type="InterPro" id="IPR018163">
    <property type="entry name" value="Thr/Ala-tRNA-synth_IIc_edit"/>
</dbReference>
<dbReference type="InterPro" id="IPR047246">
    <property type="entry name" value="ThrRS_anticodon"/>
</dbReference>
<dbReference type="InterPro" id="IPR033728">
    <property type="entry name" value="ThrRS_core"/>
</dbReference>
<dbReference type="InterPro" id="IPR012947">
    <property type="entry name" value="tRNA_SAD"/>
</dbReference>
<dbReference type="NCBIfam" id="TIGR00418">
    <property type="entry name" value="thrS"/>
    <property type="match status" value="1"/>
</dbReference>
<dbReference type="PANTHER" id="PTHR11451:SF44">
    <property type="entry name" value="THREONINE--TRNA LIGASE, CHLOROPLASTIC_MITOCHONDRIAL 2"/>
    <property type="match status" value="1"/>
</dbReference>
<dbReference type="PANTHER" id="PTHR11451">
    <property type="entry name" value="THREONINE-TRNA LIGASE"/>
    <property type="match status" value="1"/>
</dbReference>
<dbReference type="Pfam" id="PF03129">
    <property type="entry name" value="HGTP_anticodon"/>
    <property type="match status" value="1"/>
</dbReference>
<dbReference type="Pfam" id="PF02824">
    <property type="entry name" value="TGS"/>
    <property type="match status" value="1"/>
</dbReference>
<dbReference type="Pfam" id="PF00587">
    <property type="entry name" value="tRNA-synt_2b"/>
    <property type="match status" value="1"/>
</dbReference>
<dbReference type="Pfam" id="PF07973">
    <property type="entry name" value="tRNA_SAD"/>
    <property type="match status" value="1"/>
</dbReference>
<dbReference type="PRINTS" id="PR01047">
    <property type="entry name" value="TRNASYNTHTHR"/>
</dbReference>
<dbReference type="SMART" id="SM00863">
    <property type="entry name" value="tRNA_SAD"/>
    <property type="match status" value="1"/>
</dbReference>
<dbReference type="SUPFAM" id="SSF52954">
    <property type="entry name" value="Class II aaRS ABD-related"/>
    <property type="match status" value="1"/>
</dbReference>
<dbReference type="SUPFAM" id="SSF55681">
    <property type="entry name" value="Class II aaRS and biotin synthetases"/>
    <property type="match status" value="1"/>
</dbReference>
<dbReference type="SUPFAM" id="SSF81271">
    <property type="entry name" value="TGS-like"/>
    <property type="match status" value="1"/>
</dbReference>
<dbReference type="SUPFAM" id="SSF55186">
    <property type="entry name" value="ThrRS/AlaRS common domain"/>
    <property type="match status" value="1"/>
</dbReference>
<dbReference type="PROSITE" id="PS50862">
    <property type="entry name" value="AA_TRNA_LIGASE_II"/>
    <property type="match status" value="1"/>
</dbReference>
<dbReference type="PROSITE" id="PS51880">
    <property type="entry name" value="TGS"/>
    <property type="match status" value="1"/>
</dbReference>
<reference key="1">
    <citation type="submission" date="2007-11" db="EMBL/GenBank/DDBJ databases">
        <authorList>
            <consortium name="The Salmonella enterica serovar Paratyphi B Genome Sequencing Project"/>
            <person name="McClelland M."/>
            <person name="Sanderson E.K."/>
            <person name="Porwollik S."/>
            <person name="Spieth J."/>
            <person name="Clifton W.S."/>
            <person name="Fulton R."/>
            <person name="Cordes M."/>
            <person name="Wollam A."/>
            <person name="Shah N."/>
            <person name="Pepin K."/>
            <person name="Bhonagiri V."/>
            <person name="Nash W."/>
            <person name="Johnson M."/>
            <person name="Thiruvilangam P."/>
            <person name="Wilson R."/>
        </authorList>
    </citation>
    <scope>NUCLEOTIDE SEQUENCE [LARGE SCALE GENOMIC DNA]</scope>
    <source>
        <strain>ATCC BAA-1250 / SPB7</strain>
    </source>
</reference>
<keyword id="KW-0030">Aminoacyl-tRNA synthetase</keyword>
<keyword id="KW-0067">ATP-binding</keyword>
<keyword id="KW-0963">Cytoplasm</keyword>
<keyword id="KW-0436">Ligase</keyword>
<keyword id="KW-0479">Metal-binding</keyword>
<keyword id="KW-0547">Nucleotide-binding</keyword>
<keyword id="KW-0648">Protein biosynthesis</keyword>
<keyword id="KW-0694">RNA-binding</keyword>
<keyword id="KW-0820">tRNA-binding</keyword>
<keyword id="KW-0862">Zinc</keyword>
<evidence type="ECO:0000255" key="1">
    <source>
        <dbReference type="HAMAP-Rule" id="MF_00184"/>
    </source>
</evidence>
<evidence type="ECO:0000255" key="2">
    <source>
        <dbReference type="PROSITE-ProRule" id="PRU01228"/>
    </source>
</evidence>
<gene>
    <name evidence="1" type="primary">thrS</name>
    <name type="ordered locus">SPAB_02005</name>
</gene>